<sequence length="204" mass="22943">MAKVQVNNVVVLDNPSPFYNPFQFEITFECIEDLSEDLEWKIIYVGSAESEEYDQVLDSVLVGPVPAGRHMFVFQADAPNAGLIPDADAVGVTVVLITCTYRGQEFIRVGYYVNNEYTETELRENPPVKPDFSKLQRNILASNPRVTRFHINWEDNTEKLEDAESSNPNLQSLLSTDALPSASKGWSTSENSLNVMLESHMDCM</sequence>
<accession>Q9CQE6</accession>
<comment type="function">
    <text evidence="1">Histone chaperone that facilitates histone deposition and histone exchange and removal during nucleosome assembly and disassembly. Cooperates with chromatin assembly factor 1 (CAF-1) to promote replication-dependent chromatin assembly and with HIRA to promote replication-independent chromatin assembly. Promotes homologous recombination-mediated repair of double-strand breaks (DSBs) at stalled or collapsed replication forks: acts by mediating histone replacement at DSBs, leading to recruitment of the MMS22L-TONSL complex and subsequent loading of RAD51. Also involved in the nuclear import of the histone H3-H4 dimer together with importin-4 (IPO4): specifically recognizes and binds newly synthesized histones with the monomethylation of H3 'Lys-9' and acetylation at 'Lys-14' (H3K9me1K14ac) marks, and diacetylation at 'Lys-5' and 'Lys-12' of H4 (H4K5K12ac) marks in the cytosol. Required for the formation of senescence-associated heterochromatin foci (SAHF) and efficient senescence-associated cell cycle exit.</text>
</comment>
<comment type="subunit">
    <text evidence="1">Interacts with histone H3 (via C-terminus), including histone H3.1, H3.2 and H3.3, and histone H4; the interaction with H3 is direct (By similarity). Probably interacts with the heterodimeric form of H3-H4 taking the place of the second dimer (By similarity). Interacts with the CHAF1A, CHAF1B and RBBP4 subunits of the CAF-1 complex. Interacts with CABIN1, HAT1, HIRA, NASP, TAF1 and UBN1 (By similarity). Found in a soluble complex with NASP and histones H3 and H4; the interaction with NASP is probably indirect and mediated by H3-H4 (By similarity). Interacts with CDAN1. Found in a cytosolic complex with IPO4 and histones H3 and H4 (By similarity). Interacts with CREBBP (By similarity).</text>
</comment>
<comment type="subcellular location">
    <subcellularLocation>
        <location evidence="1">Nucleus</location>
    </subcellularLocation>
    <subcellularLocation>
        <location evidence="1">Chromosome</location>
    </subcellularLocation>
</comment>
<comment type="PTM">
    <text evidence="1">Phosphorylated by TLK1 and TLK2. Highly phosphorylated in S-phase and at lower levels in M-phase. TLK2-mediated phosphorylation at Ser-192 prevents proteasome-dependent degradation. Phosphorylation at Ser-192 by PRKDC in response to DNA damage promotes the histone chaperone activity and ability to replace histones at double-strand breaks (DSBs) at stalled or collapsed replication forks, leading to RAD51 recruitment.</text>
</comment>
<comment type="disruption phenotype">
    <text evidence="2">Embryonic lethality at mid-gestation (9.5 dpc).</text>
</comment>
<comment type="similarity">
    <text evidence="4">Belongs to the ASF1 family.</text>
</comment>
<protein>
    <recommendedName>
        <fullName>Histone chaperone ASF1A</fullName>
    </recommendedName>
    <alternativeName>
        <fullName>Anti-silencing function protein 1 homolog A</fullName>
    </alternativeName>
</protein>
<name>ASF1A_MOUSE</name>
<reference key="1">
    <citation type="journal article" date="2005" name="Science">
        <title>The transcriptional landscape of the mammalian genome.</title>
        <authorList>
            <person name="Carninci P."/>
            <person name="Kasukawa T."/>
            <person name="Katayama S."/>
            <person name="Gough J."/>
            <person name="Frith M.C."/>
            <person name="Maeda N."/>
            <person name="Oyama R."/>
            <person name="Ravasi T."/>
            <person name="Lenhard B."/>
            <person name="Wells C."/>
            <person name="Kodzius R."/>
            <person name="Shimokawa K."/>
            <person name="Bajic V.B."/>
            <person name="Brenner S.E."/>
            <person name="Batalov S."/>
            <person name="Forrest A.R."/>
            <person name="Zavolan M."/>
            <person name="Davis M.J."/>
            <person name="Wilming L.G."/>
            <person name="Aidinis V."/>
            <person name="Allen J.E."/>
            <person name="Ambesi-Impiombato A."/>
            <person name="Apweiler R."/>
            <person name="Aturaliya R.N."/>
            <person name="Bailey T.L."/>
            <person name="Bansal M."/>
            <person name="Baxter L."/>
            <person name="Beisel K.W."/>
            <person name="Bersano T."/>
            <person name="Bono H."/>
            <person name="Chalk A.M."/>
            <person name="Chiu K.P."/>
            <person name="Choudhary V."/>
            <person name="Christoffels A."/>
            <person name="Clutterbuck D.R."/>
            <person name="Crowe M.L."/>
            <person name="Dalla E."/>
            <person name="Dalrymple B.P."/>
            <person name="de Bono B."/>
            <person name="Della Gatta G."/>
            <person name="di Bernardo D."/>
            <person name="Down T."/>
            <person name="Engstrom P."/>
            <person name="Fagiolini M."/>
            <person name="Faulkner G."/>
            <person name="Fletcher C.F."/>
            <person name="Fukushima T."/>
            <person name="Furuno M."/>
            <person name="Futaki S."/>
            <person name="Gariboldi M."/>
            <person name="Georgii-Hemming P."/>
            <person name="Gingeras T.R."/>
            <person name="Gojobori T."/>
            <person name="Green R.E."/>
            <person name="Gustincich S."/>
            <person name="Harbers M."/>
            <person name="Hayashi Y."/>
            <person name="Hensch T.K."/>
            <person name="Hirokawa N."/>
            <person name="Hill D."/>
            <person name="Huminiecki L."/>
            <person name="Iacono M."/>
            <person name="Ikeo K."/>
            <person name="Iwama A."/>
            <person name="Ishikawa T."/>
            <person name="Jakt M."/>
            <person name="Kanapin A."/>
            <person name="Katoh M."/>
            <person name="Kawasawa Y."/>
            <person name="Kelso J."/>
            <person name="Kitamura H."/>
            <person name="Kitano H."/>
            <person name="Kollias G."/>
            <person name="Krishnan S.P."/>
            <person name="Kruger A."/>
            <person name="Kummerfeld S.K."/>
            <person name="Kurochkin I.V."/>
            <person name="Lareau L.F."/>
            <person name="Lazarevic D."/>
            <person name="Lipovich L."/>
            <person name="Liu J."/>
            <person name="Liuni S."/>
            <person name="McWilliam S."/>
            <person name="Madan Babu M."/>
            <person name="Madera M."/>
            <person name="Marchionni L."/>
            <person name="Matsuda H."/>
            <person name="Matsuzawa S."/>
            <person name="Miki H."/>
            <person name="Mignone F."/>
            <person name="Miyake S."/>
            <person name="Morris K."/>
            <person name="Mottagui-Tabar S."/>
            <person name="Mulder N."/>
            <person name="Nakano N."/>
            <person name="Nakauchi H."/>
            <person name="Ng P."/>
            <person name="Nilsson R."/>
            <person name="Nishiguchi S."/>
            <person name="Nishikawa S."/>
            <person name="Nori F."/>
            <person name="Ohara O."/>
            <person name="Okazaki Y."/>
            <person name="Orlando V."/>
            <person name="Pang K.C."/>
            <person name="Pavan W.J."/>
            <person name="Pavesi G."/>
            <person name="Pesole G."/>
            <person name="Petrovsky N."/>
            <person name="Piazza S."/>
            <person name="Reed J."/>
            <person name="Reid J.F."/>
            <person name="Ring B.Z."/>
            <person name="Ringwald M."/>
            <person name="Rost B."/>
            <person name="Ruan Y."/>
            <person name="Salzberg S.L."/>
            <person name="Sandelin A."/>
            <person name="Schneider C."/>
            <person name="Schoenbach C."/>
            <person name="Sekiguchi K."/>
            <person name="Semple C.A."/>
            <person name="Seno S."/>
            <person name="Sessa L."/>
            <person name="Sheng Y."/>
            <person name="Shibata Y."/>
            <person name="Shimada H."/>
            <person name="Shimada K."/>
            <person name="Silva D."/>
            <person name="Sinclair B."/>
            <person name="Sperling S."/>
            <person name="Stupka E."/>
            <person name="Sugiura K."/>
            <person name="Sultana R."/>
            <person name="Takenaka Y."/>
            <person name="Taki K."/>
            <person name="Tammoja K."/>
            <person name="Tan S.L."/>
            <person name="Tang S."/>
            <person name="Taylor M.S."/>
            <person name="Tegner J."/>
            <person name="Teichmann S.A."/>
            <person name="Ueda H.R."/>
            <person name="van Nimwegen E."/>
            <person name="Verardo R."/>
            <person name="Wei C.L."/>
            <person name="Yagi K."/>
            <person name="Yamanishi H."/>
            <person name="Zabarovsky E."/>
            <person name="Zhu S."/>
            <person name="Zimmer A."/>
            <person name="Hide W."/>
            <person name="Bult C."/>
            <person name="Grimmond S.M."/>
            <person name="Teasdale R.D."/>
            <person name="Liu E.T."/>
            <person name="Brusic V."/>
            <person name="Quackenbush J."/>
            <person name="Wahlestedt C."/>
            <person name="Mattick J.S."/>
            <person name="Hume D.A."/>
            <person name="Kai C."/>
            <person name="Sasaki D."/>
            <person name="Tomaru Y."/>
            <person name="Fukuda S."/>
            <person name="Kanamori-Katayama M."/>
            <person name="Suzuki M."/>
            <person name="Aoki J."/>
            <person name="Arakawa T."/>
            <person name="Iida J."/>
            <person name="Imamura K."/>
            <person name="Itoh M."/>
            <person name="Kato T."/>
            <person name="Kawaji H."/>
            <person name="Kawagashira N."/>
            <person name="Kawashima T."/>
            <person name="Kojima M."/>
            <person name="Kondo S."/>
            <person name="Konno H."/>
            <person name="Nakano K."/>
            <person name="Ninomiya N."/>
            <person name="Nishio T."/>
            <person name="Okada M."/>
            <person name="Plessy C."/>
            <person name="Shibata K."/>
            <person name="Shiraki T."/>
            <person name="Suzuki S."/>
            <person name="Tagami M."/>
            <person name="Waki K."/>
            <person name="Watahiki A."/>
            <person name="Okamura-Oho Y."/>
            <person name="Suzuki H."/>
            <person name="Kawai J."/>
            <person name="Hayashizaki Y."/>
        </authorList>
    </citation>
    <scope>NUCLEOTIDE SEQUENCE [LARGE SCALE MRNA]</scope>
    <source>
        <strain>C57BL/6J</strain>
        <strain>NOD</strain>
        <tissue>Embryo</tissue>
        <tissue>Pancreas</tissue>
        <tissue>Thymus</tissue>
        <tissue>Tongue</tissue>
    </source>
</reference>
<reference key="2">
    <citation type="journal article" date="2004" name="Genome Res.">
        <title>The status, quality, and expansion of the NIH full-length cDNA project: the Mammalian Gene Collection (MGC).</title>
        <authorList>
            <consortium name="The MGC Project Team"/>
        </authorList>
    </citation>
    <scope>NUCLEOTIDE SEQUENCE [LARGE SCALE MRNA]</scope>
    <source>
        <strain>C57BL/6J</strain>
        <tissue>Mammary gland</tissue>
    </source>
</reference>
<reference key="3">
    <citation type="journal article" date="2010" name="Cell">
        <title>A tissue-specific atlas of mouse protein phosphorylation and expression.</title>
        <authorList>
            <person name="Huttlin E.L."/>
            <person name="Jedrychowski M.P."/>
            <person name="Elias J.E."/>
            <person name="Goswami T."/>
            <person name="Rad R."/>
            <person name="Beausoleil S.A."/>
            <person name="Villen J."/>
            <person name="Haas W."/>
            <person name="Sowa M.E."/>
            <person name="Gygi S.P."/>
        </authorList>
    </citation>
    <scope>IDENTIFICATION BY MASS SPECTROMETRY [LARGE SCALE ANALYSIS]</scope>
    <source>
        <tissue>Brain</tissue>
        <tissue>Brown adipose tissue</tissue>
        <tissue>Kidney</tissue>
        <tissue>Liver</tissue>
        <tissue>Lung</tissue>
        <tissue>Pancreas</tissue>
        <tissue>Spleen</tissue>
        <tissue>Testis</tissue>
    </source>
</reference>
<reference key="4">
    <citation type="journal article" date="2011" name="Proc. Natl. Acad. Sci. U.S.A.">
        <title>Minichromosome maintenance helicase paralog MCM9 is dispensible for DNA replication but functions in germ-line stem cells and tumor suppression.</title>
        <authorList>
            <person name="Hartford S.A."/>
            <person name="Luo Y."/>
            <person name="Southard T.L."/>
            <person name="Min I.M."/>
            <person name="Lis J.T."/>
            <person name="Schimenti J.C."/>
        </authorList>
    </citation>
    <scope>DISRUPTION PHENOTYPE</scope>
</reference>
<keyword id="KW-0143">Chaperone</keyword>
<keyword id="KW-0156">Chromatin regulator</keyword>
<keyword id="KW-0158">Chromosome</keyword>
<keyword id="KW-0227">DNA damage</keyword>
<keyword id="KW-0539">Nucleus</keyword>
<keyword id="KW-0597">Phosphoprotein</keyword>
<keyword id="KW-1185">Reference proteome</keyword>
<keyword id="KW-0804">Transcription</keyword>
<keyword id="KW-0805">Transcription regulation</keyword>
<dbReference type="EMBL" id="AK007804">
    <property type="protein sequence ID" value="BAB25269.1"/>
    <property type="molecule type" value="mRNA"/>
</dbReference>
<dbReference type="EMBL" id="AK010210">
    <property type="protein sequence ID" value="BAB26770.1"/>
    <property type="molecule type" value="mRNA"/>
</dbReference>
<dbReference type="EMBL" id="AK012376">
    <property type="protein sequence ID" value="BAB28198.1"/>
    <property type="molecule type" value="mRNA"/>
</dbReference>
<dbReference type="EMBL" id="AK088618">
    <property type="protein sequence ID" value="BAC40457.1"/>
    <property type="molecule type" value="mRNA"/>
</dbReference>
<dbReference type="EMBL" id="BC027628">
    <property type="protein sequence ID" value="AAH27628.1"/>
    <property type="molecule type" value="mRNA"/>
</dbReference>
<dbReference type="CCDS" id="CCDS23847.1"/>
<dbReference type="RefSeq" id="NP_079817.1">
    <property type="nucleotide sequence ID" value="NM_025541.3"/>
</dbReference>
<dbReference type="BMRB" id="Q9CQE6"/>
<dbReference type="SMR" id="Q9CQE6"/>
<dbReference type="BioGRID" id="211447">
    <property type="interactions" value="7"/>
</dbReference>
<dbReference type="FunCoup" id="Q9CQE6">
    <property type="interactions" value="3507"/>
</dbReference>
<dbReference type="IntAct" id="Q9CQE6">
    <property type="interactions" value="61"/>
</dbReference>
<dbReference type="MINT" id="Q9CQE6"/>
<dbReference type="STRING" id="10090.ENSMUSP00000020004"/>
<dbReference type="iPTMnet" id="Q9CQE6"/>
<dbReference type="PhosphoSitePlus" id="Q9CQE6"/>
<dbReference type="jPOST" id="Q9CQE6"/>
<dbReference type="PaxDb" id="10090-ENSMUSP00000020004"/>
<dbReference type="PeptideAtlas" id="Q9CQE6"/>
<dbReference type="ProteomicsDB" id="265117"/>
<dbReference type="Pumba" id="Q9CQE6"/>
<dbReference type="Antibodypedia" id="32585">
    <property type="antibodies" value="426 antibodies from 35 providers"/>
</dbReference>
<dbReference type="DNASU" id="66403"/>
<dbReference type="Ensembl" id="ENSMUST00000020004.8">
    <property type="protein sequence ID" value="ENSMUSP00000020004.7"/>
    <property type="gene ID" value="ENSMUSG00000019857.8"/>
</dbReference>
<dbReference type="GeneID" id="66403"/>
<dbReference type="KEGG" id="mmu:66403"/>
<dbReference type="UCSC" id="uc007fbr.1">
    <property type="organism name" value="mouse"/>
</dbReference>
<dbReference type="AGR" id="MGI:1913653"/>
<dbReference type="CTD" id="25842"/>
<dbReference type="MGI" id="MGI:1913653">
    <property type="gene designation" value="Asf1a"/>
</dbReference>
<dbReference type="VEuPathDB" id="HostDB:ENSMUSG00000019857"/>
<dbReference type="eggNOG" id="KOG3265">
    <property type="taxonomic scope" value="Eukaryota"/>
</dbReference>
<dbReference type="GeneTree" id="ENSGT00390000004692"/>
<dbReference type="HOGENOM" id="CLU_060354_1_2_1"/>
<dbReference type="InParanoid" id="Q9CQE6"/>
<dbReference type="OMA" id="DYADQEM"/>
<dbReference type="OrthoDB" id="29755at2759"/>
<dbReference type="PhylomeDB" id="Q9CQE6"/>
<dbReference type="TreeFam" id="TF106429"/>
<dbReference type="Reactome" id="R-MMU-2559584">
    <property type="pathway name" value="Formation of Senescence-Associated Heterochromatin Foci (SAHF)"/>
</dbReference>
<dbReference type="BioGRID-ORCS" id="66403">
    <property type="hits" value="9 hits in 115 CRISPR screens"/>
</dbReference>
<dbReference type="ChiTaRS" id="Asf1a">
    <property type="organism name" value="mouse"/>
</dbReference>
<dbReference type="PRO" id="PR:Q9CQE6"/>
<dbReference type="Proteomes" id="UP000000589">
    <property type="component" value="Chromosome 10"/>
</dbReference>
<dbReference type="RNAct" id="Q9CQE6">
    <property type="molecule type" value="protein"/>
</dbReference>
<dbReference type="Bgee" id="ENSMUSG00000019857">
    <property type="expression patterns" value="Expressed in animal zygote and 278 other cell types or tissues"/>
</dbReference>
<dbReference type="ExpressionAtlas" id="Q9CQE6">
    <property type="expression patterns" value="baseline and differential"/>
</dbReference>
<dbReference type="GO" id="GO:0000785">
    <property type="term" value="C:chromatin"/>
    <property type="evidence" value="ECO:0007669"/>
    <property type="project" value="Ensembl"/>
</dbReference>
<dbReference type="GO" id="GO:0005654">
    <property type="term" value="C:nucleoplasm"/>
    <property type="evidence" value="ECO:0007669"/>
    <property type="project" value="Ensembl"/>
</dbReference>
<dbReference type="GO" id="GO:0032991">
    <property type="term" value="C:protein-containing complex"/>
    <property type="evidence" value="ECO:0007669"/>
    <property type="project" value="Ensembl"/>
</dbReference>
<dbReference type="GO" id="GO:0035861">
    <property type="term" value="C:site of double-strand break"/>
    <property type="evidence" value="ECO:0007669"/>
    <property type="project" value="Ensembl"/>
</dbReference>
<dbReference type="GO" id="GO:0003682">
    <property type="term" value="F:chromatin binding"/>
    <property type="evidence" value="ECO:0000314"/>
    <property type="project" value="MGI"/>
</dbReference>
<dbReference type="GO" id="GO:0042393">
    <property type="term" value="F:histone binding"/>
    <property type="evidence" value="ECO:0000266"/>
    <property type="project" value="MGI"/>
</dbReference>
<dbReference type="GO" id="GO:0140713">
    <property type="term" value="F:histone chaperone activity"/>
    <property type="evidence" value="ECO:0007669"/>
    <property type="project" value="Ensembl"/>
</dbReference>
<dbReference type="GO" id="GO:0006281">
    <property type="term" value="P:DNA repair"/>
    <property type="evidence" value="ECO:0000266"/>
    <property type="project" value="MGI"/>
</dbReference>
<dbReference type="GO" id="GO:0140861">
    <property type="term" value="P:DNA repair-dependent chromatin remodeling"/>
    <property type="evidence" value="ECO:0007669"/>
    <property type="project" value="Ensembl"/>
</dbReference>
<dbReference type="GO" id="GO:0042692">
    <property type="term" value="P:muscle cell differentiation"/>
    <property type="evidence" value="ECO:0000316"/>
    <property type="project" value="MGI"/>
</dbReference>
<dbReference type="GO" id="GO:0006334">
    <property type="term" value="P:nucleosome assembly"/>
    <property type="evidence" value="ECO:0000266"/>
    <property type="project" value="MGI"/>
</dbReference>
<dbReference type="GO" id="GO:0001649">
    <property type="term" value="P:osteoblast differentiation"/>
    <property type="evidence" value="ECO:0000316"/>
    <property type="project" value="MGI"/>
</dbReference>
<dbReference type="GO" id="GO:0031297">
    <property type="term" value="P:replication fork processing"/>
    <property type="evidence" value="ECO:0007669"/>
    <property type="project" value="Ensembl"/>
</dbReference>
<dbReference type="FunFam" id="2.60.40.1490:FF:000001">
    <property type="entry name" value="Histone chaperone ASF1"/>
    <property type="match status" value="1"/>
</dbReference>
<dbReference type="Gene3D" id="2.60.40.1490">
    <property type="entry name" value="Histone chaperone ASF1-like"/>
    <property type="match status" value="1"/>
</dbReference>
<dbReference type="InterPro" id="IPR006818">
    <property type="entry name" value="ASF1-like"/>
</dbReference>
<dbReference type="InterPro" id="IPR036747">
    <property type="entry name" value="ASF1-like_sf"/>
</dbReference>
<dbReference type="PANTHER" id="PTHR12040">
    <property type="entry name" value="ANTI-SILENCING PROTEIN 1"/>
    <property type="match status" value="1"/>
</dbReference>
<dbReference type="PANTHER" id="PTHR12040:SF8">
    <property type="entry name" value="HISTONE CHAPERONE ASF1A"/>
    <property type="match status" value="1"/>
</dbReference>
<dbReference type="Pfam" id="PF04729">
    <property type="entry name" value="ASF1_hist_chap"/>
    <property type="match status" value="1"/>
</dbReference>
<dbReference type="SUPFAM" id="SSF101546">
    <property type="entry name" value="ASF1-like"/>
    <property type="match status" value="1"/>
</dbReference>
<evidence type="ECO:0000250" key="1">
    <source>
        <dbReference type="UniProtKB" id="Q9Y294"/>
    </source>
</evidence>
<evidence type="ECO:0000269" key="2">
    <source>
    </source>
</evidence>
<evidence type="ECO:0000303" key="3">
    <source>
    </source>
</evidence>
<evidence type="ECO:0000305" key="4"/>
<evidence type="ECO:0000312" key="5">
    <source>
        <dbReference type="MGI" id="MGI:1913653"/>
    </source>
</evidence>
<gene>
    <name evidence="3 5" type="primary">Asf1a</name>
</gene>
<organism>
    <name type="scientific">Mus musculus</name>
    <name type="common">Mouse</name>
    <dbReference type="NCBI Taxonomy" id="10090"/>
    <lineage>
        <taxon>Eukaryota</taxon>
        <taxon>Metazoa</taxon>
        <taxon>Chordata</taxon>
        <taxon>Craniata</taxon>
        <taxon>Vertebrata</taxon>
        <taxon>Euteleostomi</taxon>
        <taxon>Mammalia</taxon>
        <taxon>Eutheria</taxon>
        <taxon>Euarchontoglires</taxon>
        <taxon>Glires</taxon>
        <taxon>Rodentia</taxon>
        <taxon>Myomorpha</taxon>
        <taxon>Muroidea</taxon>
        <taxon>Muridae</taxon>
        <taxon>Murinae</taxon>
        <taxon>Mus</taxon>
        <taxon>Mus</taxon>
    </lineage>
</organism>
<feature type="chain" id="PRO_0000284013" description="Histone chaperone ASF1A">
    <location>
        <begin position="1"/>
        <end position="204"/>
    </location>
</feature>
<feature type="region of interest" description="Interaction with histone H3, CHAF1B, and HIRA" evidence="1">
    <location>
        <begin position="1"/>
        <end position="156"/>
    </location>
</feature>
<feature type="region of interest" description="Required for interaction with HIRA" evidence="1">
    <location>
        <begin position="155"/>
        <end position="204"/>
    </location>
</feature>
<feature type="short sequence motif" description="Required for interaction with HIRA" evidence="1">
    <location>
        <begin position="31"/>
        <end position="37"/>
    </location>
</feature>
<feature type="modified residue" description="Phosphoserine" evidence="1">
    <location>
        <position position="192"/>
    </location>
</feature>
<proteinExistence type="evidence at protein level"/>